<name>RLMH_PSELT</name>
<sequence>MKIEIVVIGKLKEYIRPAVKEYIKMLSSFAEIKLTQIKHAKGYKDFDKSLKKEAEGIISQLKESDYVILLDQSGRSCDSISFANHFHQLIQINSSIVFVIGGPFGVDESLKKRANELLSLSDLTFTHQLAVVILLEQLFRAFKIINNQKYHY</sequence>
<dbReference type="EC" id="2.1.1.177" evidence="1"/>
<dbReference type="EMBL" id="CP000812">
    <property type="protein sequence ID" value="ABV33842.1"/>
    <property type="molecule type" value="Genomic_DNA"/>
</dbReference>
<dbReference type="RefSeq" id="WP_012003318.1">
    <property type="nucleotide sequence ID" value="NZ_BSDV01000001.1"/>
</dbReference>
<dbReference type="SMR" id="A8F6Q8"/>
<dbReference type="STRING" id="416591.Tlet_1284"/>
<dbReference type="KEGG" id="tle:Tlet_1284"/>
<dbReference type="eggNOG" id="COG1576">
    <property type="taxonomic scope" value="Bacteria"/>
</dbReference>
<dbReference type="HOGENOM" id="CLU_100552_2_0_0"/>
<dbReference type="OrthoDB" id="9806643at2"/>
<dbReference type="Proteomes" id="UP000002016">
    <property type="component" value="Chromosome"/>
</dbReference>
<dbReference type="GO" id="GO:0005737">
    <property type="term" value="C:cytoplasm"/>
    <property type="evidence" value="ECO:0007669"/>
    <property type="project" value="UniProtKB-SubCell"/>
</dbReference>
<dbReference type="GO" id="GO:0070038">
    <property type="term" value="F:rRNA (pseudouridine-N3-)-methyltransferase activity"/>
    <property type="evidence" value="ECO:0007669"/>
    <property type="project" value="UniProtKB-UniRule"/>
</dbReference>
<dbReference type="CDD" id="cd18081">
    <property type="entry name" value="RlmH-like"/>
    <property type="match status" value="1"/>
</dbReference>
<dbReference type="Gene3D" id="3.40.1280.10">
    <property type="match status" value="1"/>
</dbReference>
<dbReference type="HAMAP" id="MF_00658">
    <property type="entry name" value="23SrRNA_methyltr_H"/>
    <property type="match status" value="1"/>
</dbReference>
<dbReference type="InterPro" id="IPR029028">
    <property type="entry name" value="Alpha/beta_knot_MTases"/>
</dbReference>
<dbReference type="InterPro" id="IPR003742">
    <property type="entry name" value="RlmH-like"/>
</dbReference>
<dbReference type="InterPro" id="IPR029026">
    <property type="entry name" value="tRNA_m1G_MTases_N"/>
</dbReference>
<dbReference type="PANTHER" id="PTHR33603">
    <property type="entry name" value="METHYLTRANSFERASE"/>
    <property type="match status" value="1"/>
</dbReference>
<dbReference type="PANTHER" id="PTHR33603:SF1">
    <property type="entry name" value="RIBOSOMAL RNA LARGE SUBUNIT METHYLTRANSFERASE H"/>
    <property type="match status" value="1"/>
</dbReference>
<dbReference type="Pfam" id="PF02590">
    <property type="entry name" value="SPOUT_MTase"/>
    <property type="match status" value="1"/>
</dbReference>
<dbReference type="PIRSF" id="PIRSF004505">
    <property type="entry name" value="MT_bac"/>
    <property type="match status" value="1"/>
</dbReference>
<dbReference type="SUPFAM" id="SSF75217">
    <property type="entry name" value="alpha/beta knot"/>
    <property type="match status" value="1"/>
</dbReference>
<protein>
    <recommendedName>
        <fullName evidence="1">Ribosomal RNA large subunit methyltransferase H</fullName>
        <ecNumber evidence="1">2.1.1.177</ecNumber>
    </recommendedName>
    <alternativeName>
        <fullName evidence="1">23S rRNA (pseudouridine1915-N3)-methyltransferase</fullName>
    </alternativeName>
    <alternativeName>
        <fullName evidence="1">23S rRNA m3Psi1915 methyltransferase</fullName>
    </alternativeName>
    <alternativeName>
        <fullName evidence="1">rRNA (pseudouridine-N3-)-methyltransferase RlmH</fullName>
    </alternativeName>
</protein>
<accession>A8F6Q8</accession>
<reference key="1">
    <citation type="submission" date="2007-08" db="EMBL/GenBank/DDBJ databases">
        <title>Complete sequence of Thermotoga lettingae TMO.</title>
        <authorList>
            <consortium name="US DOE Joint Genome Institute"/>
            <person name="Copeland A."/>
            <person name="Lucas S."/>
            <person name="Lapidus A."/>
            <person name="Barry K."/>
            <person name="Glavina del Rio T."/>
            <person name="Dalin E."/>
            <person name="Tice H."/>
            <person name="Pitluck S."/>
            <person name="Foster B."/>
            <person name="Bruce D."/>
            <person name="Schmutz J."/>
            <person name="Larimer F."/>
            <person name="Land M."/>
            <person name="Hauser L."/>
            <person name="Kyrpides N."/>
            <person name="Mikhailova N."/>
            <person name="Nelson K."/>
            <person name="Gogarten J.P."/>
            <person name="Noll K."/>
            <person name="Richardson P."/>
        </authorList>
    </citation>
    <scope>NUCLEOTIDE SEQUENCE [LARGE SCALE GENOMIC DNA]</scope>
    <source>
        <strain>ATCC BAA-301 / DSM 14385 / NBRC 107922 / TMO</strain>
    </source>
</reference>
<comment type="function">
    <text evidence="1">Specifically methylates the pseudouridine at position 1915 (m3Psi1915) in 23S rRNA.</text>
</comment>
<comment type="catalytic activity">
    <reaction evidence="1">
        <text>pseudouridine(1915) in 23S rRNA + S-adenosyl-L-methionine = N(3)-methylpseudouridine(1915) in 23S rRNA + S-adenosyl-L-homocysteine + H(+)</text>
        <dbReference type="Rhea" id="RHEA:42752"/>
        <dbReference type="Rhea" id="RHEA-COMP:10221"/>
        <dbReference type="Rhea" id="RHEA-COMP:10222"/>
        <dbReference type="ChEBI" id="CHEBI:15378"/>
        <dbReference type="ChEBI" id="CHEBI:57856"/>
        <dbReference type="ChEBI" id="CHEBI:59789"/>
        <dbReference type="ChEBI" id="CHEBI:65314"/>
        <dbReference type="ChEBI" id="CHEBI:74486"/>
        <dbReference type="EC" id="2.1.1.177"/>
    </reaction>
</comment>
<comment type="subunit">
    <text evidence="1">Homodimer.</text>
</comment>
<comment type="subcellular location">
    <subcellularLocation>
        <location evidence="1">Cytoplasm</location>
    </subcellularLocation>
</comment>
<comment type="similarity">
    <text evidence="1">Belongs to the RNA methyltransferase RlmH family.</text>
</comment>
<evidence type="ECO:0000255" key="1">
    <source>
        <dbReference type="HAMAP-Rule" id="MF_00658"/>
    </source>
</evidence>
<gene>
    <name evidence="1" type="primary">rlmH</name>
    <name type="ordered locus">Tlet_1284</name>
</gene>
<proteinExistence type="inferred from homology"/>
<feature type="chain" id="PRO_1000082822" description="Ribosomal RNA large subunit methyltransferase H">
    <location>
        <begin position="1"/>
        <end position="152"/>
    </location>
</feature>
<feature type="binding site" evidence="1">
    <location>
        <position position="70"/>
    </location>
    <ligand>
        <name>S-adenosyl-L-methionine</name>
        <dbReference type="ChEBI" id="CHEBI:59789"/>
    </ligand>
</feature>
<feature type="binding site" evidence="1">
    <location>
        <position position="101"/>
    </location>
    <ligand>
        <name>S-adenosyl-L-methionine</name>
        <dbReference type="ChEBI" id="CHEBI:59789"/>
    </ligand>
</feature>
<feature type="binding site" evidence="1">
    <location>
        <begin position="120"/>
        <end position="125"/>
    </location>
    <ligand>
        <name>S-adenosyl-L-methionine</name>
        <dbReference type="ChEBI" id="CHEBI:59789"/>
    </ligand>
</feature>
<organism>
    <name type="scientific">Pseudothermotoga lettingae (strain ATCC BAA-301 / DSM 14385 / NBRC 107922 / TMO)</name>
    <name type="common">Thermotoga lettingae</name>
    <dbReference type="NCBI Taxonomy" id="416591"/>
    <lineage>
        <taxon>Bacteria</taxon>
        <taxon>Thermotogati</taxon>
        <taxon>Thermotogota</taxon>
        <taxon>Thermotogae</taxon>
        <taxon>Thermotogales</taxon>
        <taxon>Thermotogaceae</taxon>
        <taxon>Pseudothermotoga</taxon>
    </lineage>
</organism>
<keyword id="KW-0963">Cytoplasm</keyword>
<keyword id="KW-0489">Methyltransferase</keyword>
<keyword id="KW-1185">Reference proteome</keyword>
<keyword id="KW-0698">rRNA processing</keyword>
<keyword id="KW-0949">S-adenosyl-L-methionine</keyword>
<keyword id="KW-0808">Transferase</keyword>